<dbReference type="EMBL" id="AE017282">
    <property type="protein sequence ID" value="AAU91710.1"/>
    <property type="status" value="ALT_INIT"/>
    <property type="molecule type" value="Genomic_DNA"/>
</dbReference>
<dbReference type="RefSeq" id="WP_010961283.1">
    <property type="nucleotide sequence ID" value="NC_002977.6"/>
</dbReference>
<dbReference type="SMR" id="Q606H8"/>
<dbReference type="STRING" id="243233.MCA2038"/>
<dbReference type="GeneID" id="88224264"/>
<dbReference type="KEGG" id="mca:MCA2038"/>
<dbReference type="eggNOG" id="COG0360">
    <property type="taxonomic scope" value="Bacteria"/>
</dbReference>
<dbReference type="HOGENOM" id="CLU_113441_6_1_6"/>
<dbReference type="Proteomes" id="UP000006821">
    <property type="component" value="Chromosome"/>
</dbReference>
<dbReference type="GO" id="GO:0022627">
    <property type="term" value="C:cytosolic small ribosomal subunit"/>
    <property type="evidence" value="ECO:0007669"/>
    <property type="project" value="TreeGrafter"/>
</dbReference>
<dbReference type="GO" id="GO:0070181">
    <property type="term" value="F:small ribosomal subunit rRNA binding"/>
    <property type="evidence" value="ECO:0007669"/>
    <property type="project" value="TreeGrafter"/>
</dbReference>
<dbReference type="GO" id="GO:0003735">
    <property type="term" value="F:structural constituent of ribosome"/>
    <property type="evidence" value="ECO:0007669"/>
    <property type="project" value="InterPro"/>
</dbReference>
<dbReference type="GO" id="GO:0006412">
    <property type="term" value="P:translation"/>
    <property type="evidence" value="ECO:0007669"/>
    <property type="project" value="UniProtKB-UniRule"/>
</dbReference>
<dbReference type="CDD" id="cd00473">
    <property type="entry name" value="bS6"/>
    <property type="match status" value="1"/>
</dbReference>
<dbReference type="Gene3D" id="3.30.70.60">
    <property type="match status" value="1"/>
</dbReference>
<dbReference type="HAMAP" id="MF_00360">
    <property type="entry name" value="Ribosomal_bS6"/>
    <property type="match status" value="1"/>
</dbReference>
<dbReference type="InterPro" id="IPR000529">
    <property type="entry name" value="Ribosomal_bS6"/>
</dbReference>
<dbReference type="InterPro" id="IPR020815">
    <property type="entry name" value="Ribosomal_bS6_CS"/>
</dbReference>
<dbReference type="InterPro" id="IPR035980">
    <property type="entry name" value="Ribosomal_bS6_sf"/>
</dbReference>
<dbReference type="InterPro" id="IPR020814">
    <property type="entry name" value="Ribosomal_S6_plastid/chlpt"/>
</dbReference>
<dbReference type="InterPro" id="IPR014717">
    <property type="entry name" value="Transl_elong_EF1B/ribsomal_bS6"/>
</dbReference>
<dbReference type="NCBIfam" id="TIGR00166">
    <property type="entry name" value="S6"/>
    <property type="match status" value="1"/>
</dbReference>
<dbReference type="PANTHER" id="PTHR21011">
    <property type="entry name" value="MITOCHONDRIAL 28S RIBOSOMAL PROTEIN S6"/>
    <property type="match status" value="1"/>
</dbReference>
<dbReference type="PANTHER" id="PTHR21011:SF1">
    <property type="entry name" value="SMALL RIBOSOMAL SUBUNIT PROTEIN BS6M"/>
    <property type="match status" value="1"/>
</dbReference>
<dbReference type="Pfam" id="PF01250">
    <property type="entry name" value="Ribosomal_S6"/>
    <property type="match status" value="1"/>
</dbReference>
<dbReference type="SUPFAM" id="SSF54995">
    <property type="entry name" value="Ribosomal protein S6"/>
    <property type="match status" value="1"/>
</dbReference>
<dbReference type="PROSITE" id="PS01048">
    <property type="entry name" value="RIBOSOMAL_S6"/>
    <property type="match status" value="1"/>
</dbReference>
<protein>
    <recommendedName>
        <fullName evidence="1">Small ribosomal subunit protein bS6</fullName>
    </recommendedName>
    <alternativeName>
        <fullName evidence="3">30S ribosomal protein S6</fullName>
    </alternativeName>
</protein>
<sequence>MRHYEIVFMVHPDQSGQVPAMIERYRSIIEGAAGRIHRLEDWGRRQLAYPIAKLHKAHYVLMNIECDQATLEELESGFRFNDAVLRSLTIRRDEAVTEPSALARSGSDAEADRAPADEGSVEAAGAEPGSEAEAEA</sequence>
<gene>
    <name evidence="1" type="primary">rpsF</name>
    <name type="ordered locus">MCA2038</name>
</gene>
<keyword id="KW-1185">Reference proteome</keyword>
<keyword id="KW-0687">Ribonucleoprotein</keyword>
<keyword id="KW-0689">Ribosomal protein</keyword>
<keyword id="KW-0694">RNA-binding</keyword>
<keyword id="KW-0699">rRNA-binding</keyword>
<comment type="function">
    <text evidence="1">Binds together with bS18 to 16S ribosomal RNA.</text>
</comment>
<comment type="similarity">
    <text evidence="1">Belongs to the bacterial ribosomal protein bS6 family.</text>
</comment>
<comment type="sequence caution" evidence="3">
    <conflict type="erroneous initiation">
        <sequence resource="EMBL-CDS" id="AAU91710"/>
    </conflict>
</comment>
<proteinExistence type="inferred from homology"/>
<organism>
    <name type="scientific">Methylococcus capsulatus (strain ATCC 33009 / NCIMB 11132 / Bath)</name>
    <dbReference type="NCBI Taxonomy" id="243233"/>
    <lineage>
        <taxon>Bacteria</taxon>
        <taxon>Pseudomonadati</taxon>
        <taxon>Pseudomonadota</taxon>
        <taxon>Gammaproteobacteria</taxon>
        <taxon>Methylococcales</taxon>
        <taxon>Methylococcaceae</taxon>
        <taxon>Methylococcus</taxon>
    </lineage>
</organism>
<feature type="chain" id="PRO_0000176792" description="Small ribosomal subunit protein bS6">
    <location>
        <begin position="1"/>
        <end position="136"/>
    </location>
</feature>
<feature type="region of interest" description="Disordered" evidence="2">
    <location>
        <begin position="96"/>
        <end position="136"/>
    </location>
</feature>
<evidence type="ECO:0000255" key="1">
    <source>
        <dbReference type="HAMAP-Rule" id="MF_00360"/>
    </source>
</evidence>
<evidence type="ECO:0000256" key="2">
    <source>
        <dbReference type="SAM" id="MobiDB-lite"/>
    </source>
</evidence>
<evidence type="ECO:0000305" key="3"/>
<accession>Q606H8</accession>
<reference key="1">
    <citation type="journal article" date="2004" name="PLoS Biol.">
        <title>Genomic insights into methanotrophy: the complete genome sequence of Methylococcus capsulatus (Bath).</title>
        <authorList>
            <person name="Ward N.L."/>
            <person name="Larsen O."/>
            <person name="Sakwa J."/>
            <person name="Bruseth L."/>
            <person name="Khouri H.M."/>
            <person name="Durkin A.S."/>
            <person name="Dimitrov G."/>
            <person name="Jiang L."/>
            <person name="Scanlan D."/>
            <person name="Kang K.H."/>
            <person name="Lewis M.R."/>
            <person name="Nelson K.E."/>
            <person name="Methe B.A."/>
            <person name="Wu M."/>
            <person name="Heidelberg J.F."/>
            <person name="Paulsen I.T."/>
            <person name="Fouts D.E."/>
            <person name="Ravel J."/>
            <person name="Tettelin H."/>
            <person name="Ren Q."/>
            <person name="Read T.D."/>
            <person name="DeBoy R.T."/>
            <person name="Seshadri R."/>
            <person name="Salzberg S.L."/>
            <person name="Jensen H.B."/>
            <person name="Birkeland N.K."/>
            <person name="Nelson W.C."/>
            <person name="Dodson R.J."/>
            <person name="Grindhaug S.H."/>
            <person name="Holt I.E."/>
            <person name="Eidhammer I."/>
            <person name="Jonasen I."/>
            <person name="Vanaken S."/>
            <person name="Utterback T.R."/>
            <person name="Feldblyum T.V."/>
            <person name="Fraser C.M."/>
            <person name="Lillehaug J.R."/>
            <person name="Eisen J.A."/>
        </authorList>
    </citation>
    <scope>NUCLEOTIDE SEQUENCE [LARGE SCALE GENOMIC DNA]</scope>
    <source>
        <strain>ATCC 33009 / NCIMB 11132 / Bath</strain>
    </source>
</reference>
<name>RS6_METCA</name>